<protein>
    <recommendedName>
        <fullName>NEDD8-activating enzyme E1 catalytic subunit</fullName>
        <ecNumber evidence="9">6.2.1.64</ecNumber>
    </recommendedName>
    <alternativeName>
        <fullName>NEDD8-activating enzyme E1C</fullName>
    </alternativeName>
    <alternativeName>
        <fullName>Ubiquitin-activating enzyme E1C</fullName>
    </alternativeName>
    <alternativeName>
        <fullName>Ubiquitin-like modifier-activating enzyme 3</fullName>
        <shortName>Ubiquitin-activating enzyme 3</shortName>
    </alternativeName>
</protein>
<gene>
    <name type="primary">UBA3</name>
    <name type="synonym">UBE1C</name>
</gene>
<evidence type="ECO:0000250" key="1"/>
<evidence type="ECO:0000269" key="2">
    <source>
    </source>
</evidence>
<evidence type="ECO:0000269" key="3">
    <source>
    </source>
</evidence>
<evidence type="ECO:0000269" key="4">
    <source>
    </source>
</evidence>
<evidence type="ECO:0000269" key="5">
    <source>
    </source>
</evidence>
<evidence type="ECO:0000269" key="6">
    <source>
    </source>
</evidence>
<evidence type="ECO:0000269" key="7">
    <source>
    </source>
</evidence>
<evidence type="ECO:0000269" key="8">
    <source>
    </source>
</evidence>
<evidence type="ECO:0000269" key="9">
    <source>
    </source>
</evidence>
<evidence type="ECO:0000303" key="10">
    <source>
    </source>
</evidence>
<evidence type="ECO:0000305" key="11"/>
<evidence type="ECO:0007744" key="12">
    <source>
    </source>
</evidence>
<evidence type="ECO:0007829" key="13">
    <source>
        <dbReference type="PDB" id="1R4M"/>
    </source>
</evidence>
<evidence type="ECO:0007829" key="14">
    <source>
        <dbReference type="PDB" id="1TT5"/>
    </source>
</evidence>
<evidence type="ECO:0007829" key="15">
    <source>
        <dbReference type="PDB" id="1Y8X"/>
    </source>
</evidence>
<evidence type="ECO:0007829" key="16">
    <source>
        <dbReference type="PDB" id="1YOV"/>
    </source>
</evidence>
<evidence type="ECO:0007829" key="17">
    <source>
        <dbReference type="PDB" id="2NVU"/>
    </source>
</evidence>
<evidence type="ECO:0007829" key="18">
    <source>
        <dbReference type="PDB" id="3FN1"/>
    </source>
</evidence>
<evidence type="ECO:0007829" key="19">
    <source>
        <dbReference type="PDB" id="5JJM"/>
    </source>
</evidence>
<sequence>MADGEEPEKKRRRIEELLAEKMAVDGGCGDTGDWEGRWNHVKKFLERSGPFTHPDFEPSTESLQFLLDTCKVLVIGAGGLGCELLKNLALSGFRQIHVIDMDTIDVSNLNRQFLFRPKDIGRPKAEVAAEFLNDRVPNCNVVPHFNKIQDFNDTFYRQFHIIVCGLDSIIARRWINGMLISLLNYEDGVLDPSSIVPLIDGGTEGFKGNARVILPGMTACIECTLELYPPQVNFPMCTIASMPRLPEHCIEYVRMLQWPKEQPFGEGVPLDGDDPEHIQWIFQKSLERASQYNIRGVTYRLTQGVVKRIIPAVASTNAVIAAVCATEVFKIATSAYIPLNNYLVFNDVDGLYTYTFEAERKENCPACSQLPQNIQFSPSAKLQEVLDYLTNSASLQMKSPAITATLEGKNRTLYLQSVTSIEERTRPNLSKTLKELGLVDGQELAVADVTTPQTVLFKLHFTS</sequence>
<accession>Q8TBC4</accession>
<accession>A6NLB5</accession>
<accession>A8K027</accession>
<accession>O76088</accession>
<accession>Q9NTU3</accession>
<reference key="1">
    <citation type="journal article" date="2001" name="Genome Res.">
        <title>Towards a catalog of human genes and proteins: sequencing and analysis of 500 novel complete protein coding human cDNAs.</title>
        <authorList>
            <person name="Wiemann S."/>
            <person name="Weil B."/>
            <person name="Wellenreuther R."/>
            <person name="Gassenhuber J."/>
            <person name="Glassl S."/>
            <person name="Ansorge W."/>
            <person name="Boecher M."/>
            <person name="Bloecker H."/>
            <person name="Bauersachs S."/>
            <person name="Blum H."/>
            <person name="Lauber J."/>
            <person name="Duesterhoeft A."/>
            <person name="Beyer A."/>
            <person name="Koehrer K."/>
            <person name="Strack N."/>
            <person name="Mewes H.-W."/>
            <person name="Ottenwaelder B."/>
            <person name="Obermaier B."/>
            <person name="Tampe J."/>
            <person name="Heubner D."/>
            <person name="Wambutt R."/>
            <person name="Korn B."/>
            <person name="Klein M."/>
            <person name="Poustka A."/>
        </authorList>
    </citation>
    <scope>NUCLEOTIDE SEQUENCE [LARGE SCALE MRNA] (ISOFORM 1)</scope>
    <source>
        <tissue>Fetal kidney</tissue>
    </source>
</reference>
<reference key="2">
    <citation type="journal article" date="2004" name="Nat. Genet.">
        <title>Complete sequencing and characterization of 21,243 full-length human cDNAs.</title>
        <authorList>
            <person name="Ota T."/>
            <person name="Suzuki Y."/>
            <person name="Nishikawa T."/>
            <person name="Otsuki T."/>
            <person name="Sugiyama T."/>
            <person name="Irie R."/>
            <person name="Wakamatsu A."/>
            <person name="Hayashi K."/>
            <person name="Sato H."/>
            <person name="Nagai K."/>
            <person name="Kimura K."/>
            <person name="Makita H."/>
            <person name="Sekine M."/>
            <person name="Obayashi M."/>
            <person name="Nishi T."/>
            <person name="Shibahara T."/>
            <person name="Tanaka T."/>
            <person name="Ishii S."/>
            <person name="Yamamoto J."/>
            <person name="Saito K."/>
            <person name="Kawai Y."/>
            <person name="Isono Y."/>
            <person name="Nakamura Y."/>
            <person name="Nagahari K."/>
            <person name="Murakami K."/>
            <person name="Yasuda T."/>
            <person name="Iwayanagi T."/>
            <person name="Wagatsuma M."/>
            <person name="Shiratori A."/>
            <person name="Sudo H."/>
            <person name="Hosoiri T."/>
            <person name="Kaku Y."/>
            <person name="Kodaira H."/>
            <person name="Kondo H."/>
            <person name="Sugawara M."/>
            <person name="Takahashi M."/>
            <person name="Kanda K."/>
            <person name="Yokoi T."/>
            <person name="Furuya T."/>
            <person name="Kikkawa E."/>
            <person name="Omura Y."/>
            <person name="Abe K."/>
            <person name="Kamihara K."/>
            <person name="Katsuta N."/>
            <person name="Sato K."/>
            <person name="Tanikawa M."/>
            <person name="Yamazaki M."/>
            <person name="Ninomiya K."/>
            <person name="Ishibashi T."/>
            <person name="Yamashita H."/>
            <person name="Murakawa K."/>
            <person name="Fujimori K."/>
            <person name="Tanai H."/>
            <person name="Kimata M."/>
            <person name="Watanabe M."/>
            <person name="Hiraoka S."/>
            <person name="Chiba Y."/>
            <person name="Ishida S."/>
            <person name="Ono Y."/>
            <person name="Takiguchi S."/>
            <person name="Watanabe S."/>
            <person name="Yosida M."/>
            <person name="Hotuta T."/>
            <person name="Kusano J."/>
            <person name="Kanehori K."/>
            <person name="Takahashi-Fujii A."/>
            <person name="Hara H."/>
            <person name="Tanase T.-O."/>
            <person name="Nomura Y."/>
            <person name="Togiya S."/>
            <person name="Komai F."/>
            <person name="Hara R."/>
            <person name="Takeuchi K."/>
            <person name="Arita M."/>
            <person name="Imose N."/>
            <person name="Musashino K."/>
            <person name="Yuuki H."/>
            <person name="Oshima A."/>
            <person name="Sasaki N."/>
            <person name="Aotsuka S."/>
            <person name="Yoshikawa Y."/>
            <person name="Matsunawa H."/>
            <person name="Ichihara T."/>
            <person name="Shiohata N."/>
            <person name="Sano S."/>
            <person name="Moriya S."/>
            <person name="Momiyama H."/>
            <person name="Satoh N."/>
            <person name="Takami S."/>
            <person name="Terashima Y."/>
            <person name="Suzuki O."/>
            <person name="Nakagawa S."/>
            <person name="Senoh A."/>
            <person name="Mizoguchi H."/>
            <person name="Goto Y."/>
            <person name="Shimizu F."/>
            <person name="Wakebe H."/>
            <person name="Hishigaki H."/>
            <person name="Watanabe T."/>
            <person name="Sugiyama A."/>
            <person name="Takemoto M."/>
            <person name="Kawakami B."/>
            <person name="Yamazaki M."/>
            <person name="Watanabe K."/>
            <person name="Kumagai A."/>
            <person name="Itakura S."/>
            <person name="Fukuzumi Y."/>
            <person name="Fujimori Y."/>
            <person name="Komiyama M."/>
            <person name="Tashiro H."/>
            <person name="Tanigami A."/>
            <person name="Fujiwara T."/>
            <person name="Ono T."/>
            <person name="Yamada K."/>
            <person name="Fujii Y."/>
            <person name="Ozaki K."/>
            <person name="Hirao M."/>
            <person name="Ohmori Y."/>
            <person name="Kawabata A."/>
            <person name="Hikiji T."/>
            <person name="Kobatake N."/>
            <person name="Inagaki H."/>
            <person name="Ikema Y."/>
            <person name="Okamoto S."/>
            <person name="Okitani R."/>
            <person name="Kawakami T."/>
            <person name="Noguchi S."/>
            <person name="Itoh T."/>
            <person name="Shigeta K."/>
            <person name="Senba T."/>
            <person name="Matsumura K."/>
            <person name="Nakajima Y."/>
            <person name="Mizuno T."/>
            <person name="Morinaga M."/>
            <person name="Sasaki M."/>
            <person name="Togashi T."/>
            <person name="Oyama M."/>
            <person name="Hata H."/>
            <person name="Watanabe M."/>
            <person name="Komatsu T."/>
            <person name="Mizushima-Sugano J."/>
            <person name="Satoh T."/>
            <person name="Shirai Y."/>
            <person name="Takahashi Y."/>
            <person name="Nakagawa K."/>
            <person name="Okumura K."/>
            <person name="Nagase T."/>
            <person name="Nomura N."/>
            <person name="Kikuchi H."/>
            <person name="Masuho Y."/>
            <person name="Yamashita R."/>
            <person name="Nakai K."/>
            <person name="Yada T."/>
            <person name="Nakamura Y."/>
            <person name="Ohara O."/>
            <person name="Isogai T."/>
            <person name="Sugano S."/>
        </authorList>
    </citation>
    <scope>NUCLEOTIDE SEQUENCE [LARGE SCALE MRNA] (ISOFORMS 1 AND 2)</scope>
</reference>
<reference key="3">
    <citation type="journal article" date="2006" name="Nature">
        <title>The DNA sequence, annotation and analysis of human chromosome 3.</title>
        <authorList>
            <person name="Muzny D.M."/>
            <person name="Scherer S.E."/>
            <person name="Kaul R."/>
            <person name="Wang J."/>
            <person name="Yu J."/>
            <person name="Sudbrak R."/>
            <person name="Buhay C.J."/>
            <person name="Chen R."/>
            <person name="Cree A."/>
            <person name="Ding Y."/>
            <person name="Dugan-Rocha S."/>
            <person name="Gill R."/>
            <person name="Gunaratne P."/>
            <person name="Harris R.A."/>
            <person name="Hawes A.C."/>
            <person name="Hernandez J."/>
            <person name="Hodgson A.V."/>
            <person name="Hume J."/>
            <person name="Jackson A."/>
            <person name="Khan Z.M."/>
            <person name="Kovar-Smith C."/>
            <person name="Lewis L.R."/>
            <person name="Lozado R.J."/>
            <person name="Metzker M.L."/>
            <person name="Milosavljevic A."/>
            <person name="Miner G.R."/>
            <person name="Morgan M.B."/>
            <person name="Nazareth L.V."/>
            <person name="Scott G."/>
            <person name="Sodergren E."/>
            <person name="Song X.-Z."/>
            <person name="Steffen D."/>
            <person name="Wei S."/>
            <person name="Wheeler D.A."/>
            <person name="Wright M.W."/>
            <person name="Worley K.C."/>
            <person name="Yuan Y."/>
            <person name="Zhang Z."/>
            <person name="Adams C.Q."/>
            <person name="Ansari-Lari M.A."/>
            <person name="Ayele M."/>
            <person name="Brown M.J."/>
            <person name="Chen G."/>
            <person name="Chen Z."/>
            <person name="Clendenning J."/>
            <person name="Clerc-Blankenburg K.P."/>
            <person name="Chen R."/>
            <person name="Chen Z."/>
            <person name="Davis C."/>
            <person name="Delgado O."/>
            <person name="Dinh H.H."/>
            <person name="Dong W."/>
            <person name="Draper H."/>
            <person name="Ernst S."/>
            <person name="Fu G."/>
            <person name="Gonzalez-Garay M.L."/>
            <person name="Garcia D.K."/>
            <person name="Gillett W."/>
            <person name="Gu J."/>
            <person name="Hao B."/>
            <person name="Haugen E."/>
            <person name="Havlak P."/>
            <person name="He X."/>
            <person name="Hennig S."/>
            <person name="Hu S."/>
            <person name="Huang W."/>
            <person name="Jackson L.R."/>
            <person name="Jacob L.S."/>
            <person name="Kelly S.H."/>
            <person name="Kube M."/>
            <person name="Levy R."/>
            <person name="Li Z."/>
            <person name="Liu B."/>
            <person name="Liu J."/>
            <person name="Liu W."/>
            <person name="Lu J."/>
            <person name="Maheshwari M."/>
            <person name="Nguyen B.-V."/>
            <person name="Okwuonu G.O."/>
            <person name="Palmeiri A."/>
            <person name="Pasternak S."/>
            <person name="Perez L.M."/>
            <person name="Phelps K.A."/>
            <person name="Plopper F.J."/>
            <person name="Qiang B."/>
            <person name="Raymond C."/>
            <person name="Rodriguez R."/>
            <person name="Saenphimmachak C."/>
            <person name="Santibanez J."/>
            <person name="Shen H."/>
            <person name="Shen Y."/>
            <person name="Subramanian S."/>
            <person name="Tabor P.E."/>
            <person name="Verduzco D."/>
            <person name="Waldron L."/>
            <person name="Wang J."/>
            <person name="Wang J."/>
            <person name="Wang Q."/>
            <person name="Williams G.A."/>
            <person name="Wong G.K.-S."/>
            <person name="Yao Z."/>
            <person name="Zhang J."/>
            <person name="Zhang X."/>
            <person name="Zhao G."/>
            <person name="Zhou J."/>
            <person name="Zhou Y."/>
            <person name="Nelson D."/>
            <person name="Lehrach H."/>
            <person name="Reinhardt R."/>
            <person name="Naylor S.L."/>
            <person name="Yang H."/>
            <person name="Olson M."/>
            <person name="Weinstock G."/>
            <person name="Gibbs R.A."/>
        </authorList>
    </citation>
    <scope>NUCLEOTIDE SEQUENCE [LARGE SCALE GENOMIC DNA]</scope>
</reference>
<reference key="4">
    <citation type="submission" date="2005-07" db="EMBL/GenBank/DDBJ databases">
        <authorList>
            <person name="Mural R.J."/>
            <person name="Istrail S."/>
            <person name="Sutton G.G."/>
            <person name="Florea L."/>
            <person name="Halpern A.L."/>
            <person name="Mobarry C.M."/>
            <person name="Lippert R."/>
            <person name="Walenz B."/>
            <person name="Shatkay H."/>
            <person name="Dew I."/>
            <person name="Miller J.R."/>
            <person name="Flanigan M.J."/>
            <person name="Edwards N.J."/>
            <person name="Bolanos R."/>
            <person name="Fasulo D."/>
            <person name="Halldorsson B.V."/>
            <person name="Hannenhalli S."/>
            <person name="Turner R."/>
            <person name="Yooseph S."/>
            <person name="Lu F."/>
            <person name="Nusskern D.R."/>
            <person name="Shue B.C."/>
            <person name="Zheng X.H."/>
            <person name="Zhong F."/>
            <person name="Delcher A.L."/>
            <person name="Huson D.H."/>
            <person name="Kravitz S.A."/>
            <person name="Mouchard L."/>
            <person name="Reinert K."/>
            <person name="Remington K.A."/>
            <person name="Clark A.G."/>
            <person name="Waterman M.S."/>
            <person name="Eichler E.E."/>
            <person name="Adams M.D."/>
            <person name="Hunkapiller M.W."/>
            <person name="Myers E.W."/>
            <person name="Venter J.C."/>
        </authorList>
    </citation>
    <scope>NUCLEOTIDE SEQUENCE [LARGE SCALE GENOMIC DNA]</scope>
</reference>
<reference key="5">
    <citation type="journal article" date="2004" name="Genome Res.">
        <title>The status, quality, and expansion of the NIH full-length cDNA project: the Mammalian Gene Collection (MGC).</title>
        <authorList>
            <consortium name="The MGC Project Team"/>
        </authorList>
    </citation>
    <scope>NUCLEOTIDE SEQUENCE [LARGE SCALE MRNA] (ISOFORM 1)</scope>
    <scope>VARIANT ARG-9</scope>
    <source>
        <tissue>Prostatic adenocarcinoma</tissue>
    </source>
</reference>
<reference key="6">
    <citation type="journal article" date="1999" name="J. Biol. Chem.">
        <title>Identification of the activating and conjugating enzymes of the NEDD8 conjugation pathway.</title>
        <authorList>
            <person name="Gong L."/>
            <person name="Yeh E.T.H."/>
        </authorList>
    </citation>
    <scope>NUCLEOTIDE SEQUENCE [MRNA] OF 4-463 (ISOFORM 1)</scope>
    <scope>VARIANT ARG-9</scope>
    <scope>FUNCTION</scope>
    <scope>MUTAGENESIS OF CYS-237</scope>
    <scope>TISSUE SPECIFICITY</scope>
    <source>
        <tissue>Placenta</tissue>
    </source>
</reference>
<reference key="7">
    <citation type="journal article" date="1998" name="Genes Dev.">
        <title>A new NEDD8-ligating system for cullin-4A.</title>
        <authorList>
            <person name="Osaka F."/>
            <person name="Kawasaki H."/>
            <person name="Aida N."/>
            <person name="Saeki M."/>
            <person name="Chiba T."/>
            <person name="Kawashima S."/>
            <person name="Tanaka K."/>
            <person name="Kato S."/>
        </authorList>
    </citation>
    <scope>NUCLEOTIDE SEQUENCE [MRNA] OF 22-463</scope>
    <scope>FUNCTION</scope>
    <scope>CATALYTIC ACTIVITY</scope>
</reference>
<reference key="8">
    <citation type="journal article" date="2003" name="J. Biol. Chem.">
        <title>Conservation in the mechanism of Nedd8 activation by the human AppBp1-Uba3 heterodimer.</title>
        <authorList>
            <person name="Bohnsack R.N."/>
            <person name="Haas A.L."/>
        </authorList>
    </citation>
    <scope>FUNCTION</scope>
    <scope>INTERACTION WITH NAE1</scope>
</reference>
<reference key="9">
    <citation type="journal article" date="2011" name="BMC Syst. Biol.">
        <title>Initial characterization of the human central proteome.</title>
        <authorList>
            <person name="Burkard T.R."/>
            <person name="Planyavsky M."/>
            <person name="Kaupe I."/>
            <person name="Breitwieser F.P."/>
            <person name="Buerckstuemmer T."/>
            <person name="Bennett K.L."/>
            <person name="Superti-Furga G."/>
            <person name="Colinge J."/>
        </authorList>
    </citation>
    <scope>IDENTIFICATION BY MASS SPECTROMETRY [LARGE SCALE ANALYSIS]</scope>
</reference>
<reference key="10">
    <citation type="journal article" date="2012" name="Proc. Natl. Acad. Sci. U.S.A.">
        <title>N-terminal acetylome analyses and functional insights of the N-terminal acetyltransferase NatB.</title>
        <authorList>
            <person name="Van Damme P."/>
            <person name="Lasa M."/>
            <person name="Polevoda B."/>
            <person name="Gazquez C."/>
            <person name="Elosegui-Artola A."/>
            <person name="Kim D.S."/>
            <person name="De Juan-Pardo E."/>
            <person name="Demeyer K."/>
            <person name="Hole K."/>
            <person name="Larrea E."/>
            <person name="Timmerman E."/>
            <person name="Prieto J."/>
            <person name="Arnesen T."/>
            <person name="Sherman F."/>
            <person name="Gevaert K."/>
            <person name="Aldabe R."/>
        </authorList>
    </citation>
    <scope>ACETYLATION [LARGE SCALE ANALYSIS] AT ALA-2</scope>
    <scope>CLEAVAGE OF INITIATOR METHIONINE [LARGE SCALE ANALYSIS]</scope>
    <scope>IDENTIFICATION BY MASS SPECTROMETRY [LARGE SCALE ANALYSIS]</scope>
</reference>
<reference key="11">
    <citation type="journal article" date="2003" name="Mol. Cell">
        <title>The structure of the APPBP1-UBA3-NEDD8-ATP complex reveals the basis for selective ubiquitin-like protein activation by an E1.</title>
        <authorList>
            <person name="Walden H."/>
            <person name="Podgorski M.S."/>
            <person name="Huang D.T."/>
            <person name="Miller D.W."/>
            <person name="Howard R.J."/>
            <person name="Minor D.L. Jr."/>
            <person name="Holton J.M."/>
            <person name="Schulman B.A."/>
        </authorList>
    </citation>
    <scope>X-RAY CRYSTALLOGRAPHY (3.0 ANGSTROMS) OF 33-463 IN COMPLEX WITH NAE1; NEDD8 AND ATP</scope>
    <scope>MUTAGENESIS OF ARG-211</scope>
</reference>
<reference key="12">
    <citation type="journal article" date="2003" name="Nature">
        <title>Insights into the ubiquitin transfer cascade from the structure of the activating enzyme for NEDD8.</title>
        <authorList>
            <person name="Walden H."/>
            <person name="Podgorski M.S."/>
            <person name="Schulman B.A."/>
        </authorList>
    </citation>
    <scope>X-RAY CRYSTALLOGRAPHY (2.6 ANGSTROMS) OF 24-463 IN COMPLEX WITH NAE1</scope>
    <scope>MUTAGENESIS OF ILE-148; ASP-167; 227-LEU-TYR-228; THR-238; ILE-310 AND 352-TYR--TYR-357</scope>
</reference>
<reference key="13">
    <citation type="journal article" date="2004" name="Nat. Struct. Mol. Biol.">
        <title>A unique E1-E2 interaction required for optimal conjugation of the ubiquitin-like protein NEDD8.</title>
        <authorList>
            <person name="Huang D.T."/>
            <person name="Miller D.W."/>
            <person name="Mathew R."/>
            <person name="Cassell R."/>
            <person name="Holton J.M."/>
            <person name="Roussel M.F."/>
            <person name="Schulman B.A."/>
        </authorList>
    </citation>
    <scope>X-RAY CRYSTALLOGRAPHY (2.6 ANGSTROMS) OF 33-463 IN COMPLEX WITH NAE1 AND UBE2M</scope>
    <scope>MUTAGENESIS OF PHE-65; 160-HIS-ILE-161; PRO-192; ILE-195; PRO-197; LEU-214; MET-217 AND ILE-331</scope>
</reference>
<reference key="14">
    <citation type="journal article" date="2005" name="Mol. Cell">
        <title>Structural basis for recruitment of Ubc12 by an E2 binding domain in NEDD8's E1.</title>
        <authorList>
            <person name="Huang D.T."/>
            <person name="Paydar A."/>
            <person name="Zhuang M."/>
            <person name="Waddell M.B."/>
            <person name="Holton J.M."/>
            <person name="Schulman B.A."/>
        </authorList>
    </citation>
    <scope>X-RAY CRYSTALLOGRAPHY (2.4 ANGSTROMS) OF 368-463 IN COMPLEX WITH UBE2M</scope>
    <scope>MUTAGENESIS OF SER-368; GLN-369; LEU-370; THR-412; LEU-415; VAL-418; ILE-421 AND ARG-424</scope>
</reference>
<reference key="15">
    <citation type="journal article" date="2009" name="Mol. Cell">
        <title>E2-RING expansion of the NEDD8 cascade confers specificity to cullin modification.</title>
        <authorList>
            <person name="Huang D.T."/>
            <person name="Ayrault O."/>
            <person name="Hunt H.W."/>
            <person name="Taherbhoy A.M."/>
            <person name="Duda D.M."/>
            <person name="Scott D.C."/>
            <person name="Borg L.A."/>
            <person name="Neale G."/>
            <person name="Murray P.J."/>
            <person name="Roussel M.F."/>
            <person name="Schulman B.A."/>
        </authorList>
    </citation>
    <scope>X-RAY CRYSTALLOGRAPHY (2.5 ANGSTROMS) OF 368-420 IN COMPLEX WITH UBE2F</scope>
</reference>
<dbReference type="EC" id="6.2.1.64" evidence="9"/>
<dbReference type="EMBL" id="AL117566">
    <property type="protein sequence ID" value="CAB55996.2"/>
    <property type="molecule type" value="mRNA"/>
</dbReference>
<dbReference type="EMBL" id="AK002159">
    <property type="protein sequence ID" value="BAG51021.1"/>
    <property type="molecule type" value="mRNA"/>
</dbReference>
<dbReference type="EMBL" id="AK289392">
    <property type="protein sequence ID" value="BAF82081.1"/>
    <property type="molecule type" value="mRNA"/>
</dbReference>
<dbReference type="EMBL" id="AC092060">
    <property type="status" value="NOT_ANNOTATED_CDS"/>
    <property type="molecule type" value="Genomic_DNA"/>
</dbReference>
<dbReference type="EMBL" id="AC109587">
    <property type="status" value="NOT_ANNOTATED_CDS"/>
    <property type="molecule type" value="Genomic_DNA"/>
</dbReference>
<dbReference type="EMBL" id="CH471055">
    <property type="protein sequence ID" value="EAW65470.1"/>
    <property type="molecule type" value="Genomic_DNA"/>
</dbReference>
<dbReference type="EMBL" id="BC022853">
    <property type="protein sequence ID" value="AAH22853.1"/>
    <property type="molecule type" value="mRNA"/>
</dbReference>
<dbReference type="EMBL" id="AF046024">
    <property type="protein sequence ID" value="AAC27648.1"/>
    <property type="status" value="ALT_INIT"/>
    <property type="molecule type" value="mRNA"/>
</dbReference>
<dbReference type="EMBL" id="AB012190">
    <property type="protein sequence ID" value="BAA33144.1"/>
    <property type="molecule type" value="mRNA"/>
</dbReference>
<dbReference type="CCDS" id="CCDS2909.1">
    <molecule id="Q8TBC4-1"/>
</dbReference>
<dbReference type="CCDS" id="CCDS2910.1">
    <molecule id="Q8TBC4-2"/>
</dbReference>
<dbReference type="PIR" id="T17306">
    <property type="entry name" value="T17306"/>
</dbReference>
<dbReference type="RefSeq" id="NP_003959.3">
    <molecule id="Q8TBC4-1"/>
    <property type="nucleotide sequence ID" value="NM_003968.3"/>
</dbReference>
<dbReference type="RefSeq" id="NP_937838.1">
    <molecule id="Q8TBC4-2"/>
    <property type="nucleotide sequence ID" value="NM_198195.2"/>
</dbReference>
<dbReference type="PDB" id="1R4M">
    <property type="method" value="X-ray"/>
    <property type="resolution" value="3.00 A"/>
    <property type="chains" value="B/D/F/H=33-463"/>
</dbReference>
<dbReference type="PDB" id="1R4N">
    <property type="method" value="X-ray"/>
    <property type="resolution" value="3.60 A"/>
    <property type="chains" value="B/D/F/H=33-463"/>
</dbReference>
<dbReference type="PDB" id="1TT5">
    <property type="method" value="X-ray"/>
    <property type="resolution" value="2.60 A"/>
    <property type="chains" value="B/D=33-463"/>
</dbReference>
<dbReference type="PDB" id="1Y8X">
    <property type="method" value="X-ray"/>
    <property type="resolution" value="2.40 A"/>
    <property type="chains" value="B=368-463"/>
</dbReference>
<dbReference type="PDB" id="1YOV">
    <property type="method" value="X-ray"/>
    <property type="resolution" value="2.60 A"/>
    <property type="chains" value="B/D=22-463"/>
</dbReference>
<dbReference type="PDB" id="2LQ7">
    <property type="method" value="NMR"/>
    <property type="chains" value="A=369-463"/>
</dbReference>
<dbReference type="PDB" id="2NVU">
    <property type="method" value="X-ray"/>
    <property type="resolution" value="2.80 A"/>
    <property type="chains" value="B=33-463"/>
</dbReference>
<dbReference type="PDB" id="3DBH">
    <property type="method" value="X-ray"/>
    <property type="resolution" value="2.85 A"/>
    <property type="chains" value="B/D/F/H=33-463"/>
</dbReference>
<dbReference type="PDB" id="3DBL">
    <property type="method" value="X-ray"/>
    <property type="resolution" value="2.90 A"/>
    <property type="chains" value="B/D/F/H=33-463"/>
</dbReference>
<dbReference type="PDB" id="3DBR">
    <property type="method" value="X-ray"/>
    <property type="resolution" value="3.05 A"/>
    <property type="chains" value="B/D/F/H=33-463"/>
</dbReference>
<dbReference type="PDB" id="3FN1">
    <property type="method" value="X-ray"/>
    <property type="resolution" value="2.50 A"/>
    <property type="chains" value="A=368-463"/>
</dbReference>
<dbReference type="PDB" id="3GZN">
    <property type="method" value="X-ray"/>
    <property type="resolution" value="3.00 A"/>
    <property type="chains" value="B/D=1-463"/>
</dbReference>
<dbReference type="PDB" id="5JJM">
    <property type="method" value="X-ray"/>
    <property type="resolution" value="2.15 A"/>
    <property type="chains" value="G/H/I/J=62-69"/>
</dbReference>
<dbReference type="PDBsum" id="1R4M"/>
<dbReference type="PDBsum" id="1R4N"/>
<dbReference type="PDBsum" id="1TT5"/>
<dbReference type="PDBsum" id="1Y8X"/>
<dbReference type="PDBsum" id="1YOV"/>
<dbReference type="PDBsum" id="2LQ7"/>
<dbReference type="PDBsum" id="2NVU"/>
<dbReference type="PDBsum" id="3DBH"/>
<dbReference type="PDBsum" id="3DBL"/>
<dbReference type="PDBsum" id="3DBR"/>
<dbReference type="PDBsum" id="3FN1"/>
<dbReference type="PDBsum" id="3GZN"/>
<dbReference type="PDBsum" id="5JJM"/>
<dbReference type="BMRB" id="Q8TBC4"/>
<dbReference type="SMR" id="Q8TBC4"/>
<dbReference type="BioGRID" id="114503">
    <property type="interactions" value="101"/>
</dbReference>
<dbReference type="ComplexPortal" id="CPX-2587">
    <property type="entry name" value="NEDD8 E1 activating enzyme complex, NAE1-UBA3"/>
</dbReference>
<dbReference type="CORUM" id="Q8TBC4"/>
<dbReference type="FunCoup" id="Q8TBC4">
    <property type="interactions" value="4086"/>
</dbReference>
<dbReference type="IntAct" id="Q8TBC4">
    <property type="interactions" value="32"/>
</dbReference>
<dbReference type="MINT" id="Q8TBC4"/>
<dbReference type="STRING" id="9606.ENSP00000354340"/>
<dbReference type="BindingDB" id="Q8TBC4"/>
<dbReference type="ChEMBL" id="CHEMBL2016430"/>
<dbReference type="DrugBank" id="DB11759">
    <property type="generic name" value="Pevonedistat"/>
</dbReference>
<dbReference type="MoonDB" id="Q8TBC4">
    <property type="type" value="Predicted"/>
</dbReference>
<dbReference type="GlyGen" id="Q8TBC4">
    <property type="glycosylation" value="1 site, 1 O-linked glycan (1 site)"/>
</dbReference>
<dbReference type="iPTMnet" id="Q8TBC4"/>
<dbReference type="MetOSite" id="Q8TBC4"/>
<dbReference type="PhosphoSitePlus" id="Q8TBC4"/>
<dbReference type="SwissPalm" id="Q8TBC4"/>
<dbReference type="BioMuta" id="UBA3"/>
<dbReference type="DMDM" id="83305811"/>
<dbReference type="jPOST" id="Q8TBC4"/>
<dbReference type="MassIVE" id="Q8TBC4"/>
<dbReference type="PaxDb" id="9606-ENSP00000354340"/>
<dbReference type="PeptideAtlas" id="Q8TBC4"/>
<dbReference type="ProteomicsDB" id="73991">
    <molecule id="Q8TBC4-1"/>
</dbReference>
<dbReference type="ProteomicsDB" id="73992">
    <molecule id="Q8TBC4-2"/>
</dbReference>
<dbReference type="Pumba" id="Q8TBC4"/>
<dbReference type="Antibodypedia" id="31863">
    <property type="antibodies" value="195 antibodies from 30 providers"/>
</dbReference>
<dbReference type="DNASU" id="9039"/>
<dbReference type="Ensembl" id="ENST00000349511.8">
    <molecule id="Q8TBC4-2"/>
    <property type="protein sequence ID" value="ENSP00000340041.4"/>
    <property type="gene ID" value="ENSG00000144744.18"/>
</dbReference>
<dbReference type="Ensembl" id="ENST00000361055.9">
    <molecule id="Q8TBC4-1"/>
    <property type="protein sequence ID" value="ENSP00000354340.4"/>
    <property type="gene ID" value="ENSG00000144744.18"/>
</dbReference>
<dbReference type="GeneID" id="9039"/>
<dbReference type="KEGG" id="hsa:9039"/>
<dbReference type="MANE-Select" id="ENST00000361055.9">
    <property type="protein sequence ID" value="ENSP00000354340.4"/>
    <property type="RefSeq nucleotide sequence ID" value="NM_003968.4"/>
    <property type="RefSeq protein sequence ID" value="NP_003959.3"/>
</dbReference>
<dbReference type="UCSC" id="uc003dno.4">
    <molecule id="Q8TBC4-1"/>
    <property type="organism name" value="human"/>
</dbReference>
<dbReference type="AGR" id="HGNC:12470"/>
<dbReference type="CTD" id="9039"/>
<dbReference type="DisGeNET" id="9039"/>
<dbReference type="GeneCards" id="UBA3"/>
<dbReference type="HGNC" id="HGNC:12470">
    <property type="gene designation" value="UBA3"/>
</dbReference>
<dbReference type="HPA" id="ENSG00000144744">
    <property type="expression patterns" value="Low tissue specificity"/>
</dbReference>
<dbReference type="MIM" id="603172">
    <property type="type" value="gene"/>
</dbReference>
<dbReference type="neXtProt" id="NX_Q8TBC4"/>
<dbReference type="OpenTargets" id="ENSG00000144744"/>
<dbReference type="PharmGKB" id="PA162407622"/>
<dbReference type="VEuPathDB" id="HostDB:ENSG00000144744"/>
<dbReference type="eggNOG" id="KOG2015">
    <property type="taxonomic scope" value="Eukaryota"/>
</dbReference>
<dbReference type="GeneTree" id="ENSGT00550000074831"/>
<dbReference type="HOGENOM" id="CLU_013325_13_1_1"/>
<dbReference type="InParanoid" id="Q8TBC4"/>
<dbReference type="OMA" id="PYLENYM"/>
<dbReference type="OrthoDB" id="5977743at2759"/>
<dbReference type="PAN-GO" id="Q8TBC4">
    <property type="GO annotations" value="4 GO annotations based on evolutionary models"/>
</dbReference>
<dbReference type="PhylomeDB" id="Q8TBC4"/>
<dbReference type="TreeFam" id="TF300499"/>
<dbReference type="BioCyc" id="MetaCyc:HS07200-MONOMER"/>
<dbReference type="BRENDA" id="2.3.2.23">
    <property type="organism ID" value="2681"/>
</dbReference>
<dbReference type="BRENDA" id="6.2.1.64">
    <property type="organism ID" value="2681"/>
</dbReference>
<dbReference type="PathwayCommons" id="Q8TBC4"/>
<dbReference type="Reactome" id="R-HSA-5607761">
    <property type="pathway name" value="Dectin-1 mediated noncanonical NF-kB signaling"/>
</dbReference>
<dbReference type="Reactome" id="R-HSA-5676590">
    <property type="pathway name" value="NIK--&gt;noncanonical NF-kB signaling"/>
</dbReference>
<dbReference type="Reactome" id="R-HSA-8951664">
    <property type="pathway name" value="Neddylation"/>
</dbReference>
<dbReference type="Reactome" id="R-HSA-983168">
    <property type="pathway name" value="Antigen processing: Ubiquitination &amp; Proteasome degradation"/>
</dbReference>
<dbReference type="SignaLink" id="Q8TBC4"/>
<dbReference type="SIGNOR" id="Q8TBC4"/>
<dbReference type="UniPathway" id="UPA00885"/>
<dbReference type="BioGRID-ORCS" id="9039">
    <property type="hits" value="605 hits in 1195 CRISPR screens"/>
</dbReference>
<dbReference type="ChiTaRS" id="UBA3">
    <property type="organism name" value="human"/>
</dbReference>
<dbReference type="EvolutionaryTrace" id="Q8TBC4"/>
<dbReference type="GeneWiki" id="UBE1C"/>
<dbReference type="GenomeRNAi" id="9039"/>
<dbReference type="Pharos" id="Q8TBC4">
    <property type="development level" value="Tchem"/>
</dbReference>
<dbReference type="PRO" id="PR:Q8TBC4"/>
<dbReference type="Proteomes" id="UP000005640">
    <property type="component" value="Chromosome 3"/>
</dbReference>
<dbReference type="RNAct" id="Q8TBC4">
    <property type="molecule type" value="protein"/>
</dbReference>
<dbReference type="Bgee" id="ENSG00000144744">
    <property type="expression patterns" value="Expressed in palpebral conjunctiva and 211 other cell types or tissues"/>
</dbReference>
<dbReference type="ExpressionAtlas" id="Q8TBC4">
    <property type="expression patterns" value="baseline and differential"/>
</dbReference>
<dbReference type="GO" id="GO:0005737">
    <property type="term" value="C:cytoplasm"/>
    <property type="evidence" value="ECO:0000318"/>
    <property type="project" value="GO_Central"/>
</dbReference>
<dbReference type="GO" id="GO:0005829">
    <property type="term" value="C:cytosol"/>
    <property type="evidence" value="ECO:0000304"/>
    <property type="project" value="Reactome"/>
</dbReference>
<dbReference type="GO" id="GO:0005634">
    <property type="term" value="C:nucleus"/>
    <property type="evidence" value="ECO:0000314"/>
    <property type="project" value="LIFEdb"/>
</dbReference>
<dbReference type="GO" id="GO:0032991">
    <property type="term" value="C:protein-containing complex"/>
    <property type="evidence" value="ECO:0000314"/>
    <property type="project" value="UniProtKB"/>
</dbReference>
<dbReference type="GO" id="GO:0005524">
    <property type="term" value="F:ATP binding"/>
    <property type="evidence" value="ECO:0007669"/>
    <property type="project" value="UniProtKB-KW"/>
</dbReference>
<dbReference type="GO" id="GO:0042802">
    <property type="term" value="F:identical protein binding"/>
    <property type="evidence" value="ECO:0000353"/>
    <property type="project" value="IntAct"/>
</dbReference>
<dbReference type="GO" id="GO:0019781">
    <property type="term" value="F:NEDD8 activating enzyme activity"/>
    <property type="evidence" value="ECO:0000314"/>
    <property type="project" value="MGI"/>
</dbReference>
<dbReference type="GO" id="GO:0019788">
    <property type="term" value="F:NEDD8 transferase activity"/>
    <property type="evidence" value="ECO:0000304"/>
    <property type="project" value="Reactome"/>
</dbReference>
<dbReference type="GO" id="GO:0046982">
    <property type="term" value="F:protein heterodimerization activity"/>
    <property type="evidence" value="ECO:0000353"/>
    <property type="project" value="UniProtKB"/>
</dbReference>
<dbReference type="GO" id="GO:0007113">
    <property type="term" value="P:endomitotic cell cycle"/>
    <property type="evidence" value="ECO:0007669"/>
    <property type="project" value="Ensembl"/>
</dbReference>
<dbReference type="GO" id="GO:0043687">
    <property type="term" value="P:post-translational protein modification"/>
    <property type="evidence" value="ECO:0000304"/>
    <property type="project" value="Reactome"/>
</dbReference>
<dbReference type="GO" id="GO:0036211">
    <property type="term" value="P:protein modification process"/>
    <property type="evidence" value="ECO:0000304"/>
    <property type="project" value="ProtInc"/>
</dbReference>
<dbReference type="GO" id="GO:0045116">
    <property type="term" value="P:protein neddylation"/>
    <property type="evidence" value="ECO:0000314"/>
    <property type="project" value="UniProtKB"/>
</dbReference>
<dbReference type="GO" id="GO:0006508">
    <property type="term" value="P:proteolysis"/>
    <property type="evidence" value="ECO:0000304"/>
    <property type="project" value="ProtInc"/>
</dbReference>
<dbReference type="GO" id="GO:0051726">
    <property type="term" value="P:regulation of cell cycle"/>
    <property type="evidence" value="ECO:0007669"/>
    <property type="project" value="Ensembl"/>
</dbReference>
<dbReference type="CDD" id="cd01488">
    <property type="entry name" value="Uba3_RUB"/>
    <property type="match status" value="1"/>
</dbReference>
<dbReference type="FunFam" id="1.10.10.520:FF:000001">
    <property type="entry name" value="NEDD8-activating enzyme E1 catalytic subunit"/>
    <property type="match status" value="1"/>
</dbReference>
<dbReference type="FunFam" id="3.40.50.720:FF:000106">
    <property type="entry name" value="NEDD8-activating enzyme E1 catalytic subunit, putative"/>
    <property type="match status" value="1"/>
</dbReference>
<dbReference type="FunFam" id="3.10.290.20:FF:000001">
    <property type="entry name" value="NEDD8-activating enzyme E1 catalytic subunit, variant"/>
    <property type="match status" value="1"/>
</dbReference>
<dbReference type="FunFam" id="3.50.50.80:FF:000002">
    <property type="entry name" value="SUMO-activating enzyme subunit 2"/>
    <property type="match status" value="1"/>
</dbReference>
<dbReference type="Gene3D" id="3.40.50.720">
    <property type="entry name" value="NAD(P)-binding Rossmann-like Domain"/>
    <property type="match status" value="1"/>
</dbReference>
<dbReference type="Gene3D" id="1.10.10.520">
    <property type="entry name" value="Ubiquitin activating enzymes (Uba3). Chain: B, domain 2"/>
    <property type="match status" value="1"/>
</dbReference>
<dbReference type="Gene3D" id="3.10.290.20">
    <property type="entry name" value="Ubiquitin-like 2 activating enzyme e1b. Chain: B, domain 3"/>
    <property type="match status" value="1"/>
</dbReference>
<dbReference type="InterPro" id="IPR014929">
    <property type="entry name" value="E2-binding"/>
</dbReference>
<dbReference type="InterPro" id="IPR045886">
    <property type="entry name" value="ThiF/MoeB/HesA"/>
</dbReference>
<dbReference type="InterPro" id="IPR000594">
    <property type="entry name" value="ThiF_NAD_FAD-bd"/>
</dbReference>
<dbReference type="InterPro" id="IPR023318">
    <property type="entry name" value="Ub_act_enz_dom_a_sf"/>
</dbReference>
<dbReference type="InterPro" id="IPR030468">
    <property type="entry name" value="Uba3_N"/>
</dbReference>
<dbReference type="InterPro" id="IPR035985">
    <property type="entry name" value="Ubiquitin-activating_enz"/>
</dbReference>
<dbReference type="InterPro" id="IPR033127">
    <property type="entry name" value="UBQ-activ_enz_E1_Cys_AS"/>
</dbReference>
<dbReference type="PANTHER" id="PTHR10953:SF6">
    <property type="entry name" value="NEDD8-ACTIVATING ENZYME E1 CATALYTIC SUBUNIT"/>
    <property type="match status" value="1"/>
</dbReference>
<dbReference type="PANTHER" id="PTHR10953">
    <property type="entry name" value="UBIQUITIN-ACTIVATING ENZYME E1"/>
    <property type="match status" value="1"/>
</dbReference>
<dbReference type="Pfam" id="PF08825">
    <property type="entry name" value="E2_bind"/>
    <property type="match status" value="1"/>
</dbReference>
<dbReference type="Pfam" id="PF00899">
    <property type="entry name" value="ThiF"/>
    <property type="match status" value="1"/>
</dbReference>
<dbReference type="SMART" id="SM01181">
    <property type="entry name" value="E2_bind"/>
    <property type="match status" value="1"/>
</dbReference>
<dbReference type="SUPFAM" id="SSF69572">
    <property type="entry name" value="Activating enzymes of the ubiquitin-like proteins"/>
    <property type="match status" value="1"/>
</dbReference>
<dbReference type="PROSITE" id="PS00865">
    <property type="entry name" value="UBIQUITIN_ACTIVAT_2"/>
    <property type="match status" value="1"/>
</dbReference>
<proteinExistence type="evidence at protein level"/>
<feature type="initiator methionine" description="Removed" evidence="12">
    <location>
        <position position="1"/>
    </location>
</feature>
<feature type="chain" id="PRO_0000194941" description="NEDD8-activating enzyme E1 catalytic subunit">
    <location>
        <begin position="2"/>
        <end position="463"/>
    </location>
</feature>
<feature type="region of interest" description="Interaction with UBE2M N-terminus">
    <location>
        <begin position="53"/>
        <end position="70"/>
    </location>
</feature>
<feature type="region of interest" description="Interaction with UBE2M N-terminus">
    <location>
        <begin position="157"/>
        <end position="161"/>
    </location>
</feature>
<feature type="region of interest" description="Interaction with UBE2M N-terminus">
    <location>
        <begin position="192"/>
        <end position="217"/>
    </location>
</feature>
<feature type="region of interest" description="Interaction with NEDD8">
    <location>
        <begin position="227"/>
        <end position="229"/>
    </location>
</feature>
<feature type="region of interest" description="Interaction with NAE1" evidence="4">
    <location>
        <begin position="242"/>
        <end position="248"/>
    </location>
</feature>
<feature type="region of interest" description="Interaction with NAE1" evidence="4">
    <location>
        <begin position="292"/>
        <end position="295"/>
    </location>
</feature>
<feature type="region of interest" description="Interaction with UBE2M N-terminus">
    <location>
        <begin position="331"/>
        <end position="338"/>
    </location>
</feature>
<feature type="region of interest" description="Interaction with NEDD8">
    <location>
        <begin position="352"/>
        <end position="357"/>
    </location>
</feature>
<feature type="region of interest" description="Interaction with UBE2M core domain">
    <location>
        <begin position="368"/>
        <end position="463"/>
    </location>
</feature>
<feature type="active site" description="Glycyl thioester intermediate">
    <location>
        <position position="237"/>
    </location>
</feature>
<feature type="binding site" evidence="5">
    <location>
        <begin position="100"/>
        <end position="124"/>
    </location>
    <ligand>
        <name>ATP</name>
        <dbReference type="ChEBI" id="CHEBI:30616"/>
    </ligand>
</feature>
<feature type="binding site" evidence="5">
    <location>
        <begin position="148"/>
        <end position="171"/>
    </location>
    <ligand>
        <name>ATP</name>
        <dbReference type="ChEBI" id="CHEBI:30616"/>
    </ligand>
</feature>
<feature type="site" description="Determines specificity for NEDD8">
    <location>
        <position position="211"/>
    </location>
</feature>
<feature type="modified residue" description="N-acetylalanine" evidence="12">
    <location>
        <position position="2"/>
    </location>
</feature>
<feature type="splice variant" id="VSP_041127" description="In isoform 2." evidence="10">
    <location>
        <begin position="8"/>
        <end position="21"/>
    </location>
</feature>
<feature type="sequence variant" id="VAR_023945" description="In dbSNP:rs17852113." evidence="2 7">
    <original>K</original>
    <variation>R</variation>
    <location>
        <position position="9"/>
    </location>
</feature>
<feature type="mutagenesis site" description="Reduces affinity for UBE2M." evidence="6">
    <original>F</original>
    <variation>G</variation>
    <location>
        <position position="65"/>
    </location>
</feature>
<feature type="mutagenesis site" description="No effect on NEDD8 adenylation." evidence="3">
    <original>I</original>
    <variation>A</variation>
    <location>
        <position position="148"/>
    </location>
</feature>
<feature type="mutagenesis site" description="Reduces affinity for UBE2M." evidence="6">
    <original>HI</original>
    <variation>AA</variation>
    <location>
        <begin position="160"/>
        <end position="161"/>
    </location>
</feature>
<feature type="mutagenesis site" description="Abolishes NEDD8 adenylation." evidence="3">
    <original>D</original>
    <variation>A</variation>
    <location>
        <position position="167"/>
    </location>
</feature>
<feature type="mutagenesis site" description="Reduces affinity for UBE2M; when associated with A-195 and A-197." evidence="6">
    <original>P</original>
    <variation>A</variation>
    <location>
        <position position="192"/>
    </location>
</feature>
<feature type="mutagenesis site" description="Reduces affinity for UBE2M; when associated with A-192 and A-197." evidence="6">
    <original>I</original>
    <variation>A</variation>
    <location>
        <position position="195"/>
    </location>
</feature>
<feature type="mutagenesis site" description="Reduces affinity for UBE2M; when associated with A-192 and A-195." evidence="6">
    <original>P</original>
    <variation>A</variation>
    <location>
        <position position="197"/>
    </location>
</feature>
<feature type="mutagenesis site" description="Abolishes specificity for NEDD8." evidence="5">
    <original>R</original>
    <variation>Q</variation>
    <location>
        <position position="211"/>
    </location>
</feature>
<feature type="mutagenesis site" description="Reduces affinity for UBE2M; when associated with A-217." evidence="6">
    <original>L</original>
    <variation>A</variation>
    <location>
        <position position="214"/>
    </location>
</feature>
<feature type="mutagenesis site" description="Reduces affinity for UBE2M; when associated with A-214." evidence="6">
    <original>M</original>
    <variation>A</variation>
    <location>
        <position position="217"/>
    </location>
</feature>
<feature type="mutagenesis site" description="Strongly reduces NEDD8 adenylation." evidence="3">
    <original>LY</original>
    <variation>DD</variation>
    <location>
        <begin position="227"/>
        <end position="228"/>
    </location>
</feature>
<feature type="mutagenesis site" description="Abolishes thioester intermediate formation." evidence="2">
    <original>C</original>
    <variation>S</variation>
    <location>
        <position position="237"/>
    </location>
</feature>
<feature type="mutagenesis site" description="No effect on NEDD8 adenylation; impairs thioester intermediate formation." evidence="3">
    <original>T</original>
    <variation>A</variation>
    <location>
        <position position="238"/>
    </location>
</feature>
<feature type="mutagenesis site" description="No effect on NEDD8 adenylation or thioester intermediate formation; impairs NEDD8 transfer to UBE2M." evidence="3">
    <original>I</original>
    <variation>A</variation>
    <location>
        <position position="310"/>
    </location>
</feature>
<feature type="mutagenesis site" description="Reduces affinity for UBE2M." evidence="6">
    <original>I</original>
    <variation>A</variation>
    <location>
        <position position="331"/>
    </location>
</feature>
<feature type="mutagenesis site" description="Abolishes NEDD8 adenylation." evidence="3">
    <original>YTYTFE</original>
    <variation>ATATA</variation>
    <location>
        <begin position="352"/>
        <end position="357"/>
    </location>
</feature>
<feature type="mutagenesis site" description="Impairs NEDD8 transfer to UBE2M." evidence="8">
    <original>S</original>
    <variation>P</variation>
    <location>
        <position position="368"/>
    </location>
</feature>
<feature type="mutagenesis site" description="No effect on NEDD8 transfer to UBE2M." evidence="8">
    <original>Q</original>
    <variation>P</variation>
    <location>
        <position position="369"/>
    </location>
</feature>
<feature type="mutagenesis site" description="Impairs NEDD8 transfer to UBE2M." evidence="8">
    <original>L</original>
    <variation>P</variation>
    <location>
        <position position="370"/>
    </location>
</feature>
<feature type="mutagenesis site" description="Impairs NEDD8 transfer to UBE2M." evidence="8">
    <original>T</original>
    <variation>A</variation>
    <location>
        <position position="412"/>
    </location>
</feature>
<feature type="mutagenesis site" description="Impairs NEDD8 transfer to UBE2M." evidence="8">
    <original>L</original>
    <variation>A</variation>
    <location>
        <position position="415"/>
    </location>
</feature>
<feature type="mutagenesis site" description="Impairs NEDD8 transfer to UBE2M." evidence="8">
    <original>V</original>
    <variation>A</variation>
    <location>
        <position position="418"/>
    </location>
</feature>
<feature type="mutagenesis site" description="Impairs NEDD8 transfer to UBE2M." evidence="8">
    <original>I</original>
    <variation>A</variation>
    <location>
        <position position="421"/>
    </location>
</feature>
<feature type="mutagenesis site" description="No effect on NEDD8 transfer to UBE2M." evidence="8">
    <original>R</original>
    <variation>A</variation>
    <location>
        <position position="424"/>
    </location>
</feature>
<feature type="sequence conflict" description="In Ref. 1; CAB55996." evidence="11" ref="1">
    <original>N</original>
    <variation>Y</variation>
    <location>
        <position position="146"/>
    </location>
</feature>
<feature type="sequence conflict" description="In Ref. 1; CAB55996." evidence="11" ref="1">
    <original>D</original>
    <variation>G</variation>
    <location>
        <position position="271"/>
    </location>
</feature>
<feature type="strand" evidence="17">
    <location>
        <begin position="31"/>
        <end position="33"/>
    </location>
</feature>
<feature type="turn" evidence="14">
    <location>
        <begin position="35"/>
        <end position="38"/>
    </location>
</feature>
<feature type="helix" evidence="14">
    <location>
        <begin position="39"/>
        <end position="46"/>
    </location>
</feature>
<feature type="helix" evidence="19">
    <location>
        <begin position="63"/>
        <end position="67"/>
    </location>
</feature>
<feature type="strand" evidence="14">
    <location>
        <begin position="72"/>
        <end position="75"/>
    </location>
</feature>
<feature type="helix" evidence="14">
    <location>
        <begin position="80"/>
        <end position="90"/>
    </location>
</feature>
<feature type="strand" evidence="14">
    <location>
        <begin position="96"/>
        <end position="100"/>
    </location>
</feature>
<feature type="helix" evidence="14">
    <location>
        <begin position="106"/>
        <end position="108"/>
    </location>
</feature>
<feature type="turn" evidence="14">
    <location>
        <begin position="109"/>
        <end position="111"/>
    </location>
</feature>
<feature type="helix" evidence="14">
    <location>
        <begin position="117"/>
        <end position="119"/>
    </location>
</feature>
<feature type="helix" evidence="14">
    <location>
        <begin position="124"/>
        <end position="135"/>
    </location>
</feature>
<feature type="strand" evidence="14">
    <location>
        <begin position="142"/>
        <end position="146"/>
    </location>
</feature>
<feature type="helix" evidence="14">
    <location>
        <begin position="148"/>
        <end position="150"/>
    </location>
</feature>
<feature type="helix" evidence="14">
    <location>
        <begin position="153"/>
        <end position="156"/>
    </location>
</feature>
<feature type="strand" evidence="14">
    <location>
        <begin position="160"/>
        <end position="164"/>
    </location>
</feature>
<feature type="helix" evidence="14">
    <location>
        <begin position="169"/>
        <end position="181"/>
    </location>
</feature>
<feature type="strand" evidence="14">
    <location>
        <begin position="185"/>
        <end position="188"/>
    </location>
</feature>
<feature type="strand" evidence="13">
    <location>
        <begin position="189"/>
        <end position="191"/>
    </location>
</feature>
<feature type="helix" evidence="14">
    <location>
        <begin position="192"/>
        <end position="194"/>
    </location>
</feature>
<feature type="strand" evidence="14">
    <location>
        <begin position="198"/>
        <end position="204"/>
    </location>
</feature>
<feature type="strand" evidence="14">
    <location>
        <begin position="207"/>
        <end position="213"/>
    </location>
</feature>
<feature type="turn" evidence="14">
    <location>
        <begin position="215"/>
        <end position="217"/>
    </location>
</feature>
<feature type="helix" evidence="14">
    <location>
        <begin position="221"/>
        <end position="227"/>
    </location>
</feature>
<feature type="helix" evidence="14">
    <location>
        <begin position="236"/>
        <end position="241"/>
    </location>
</feature>
<feature type="helix" evidence="14">
    <location>
        <begin position="246"/>
        <end position="255"/>
    </location>
</feature>
<feature type="helix" evidence="14">
    <location>
        <begin position="257"/>
        <end position="260"/>
    </location>
</feature>
<feature type="helix" evidence="14">
    <location>
        <begin position="275"/>
        <end position="291"/>
    </location>
</feature>
<feature type="helix" evidence="14">
    <location>
        <begin position="299"/>
        <end position="306"/>
    </location>
</feature>
<feature type="helix" evidence="14">
    <location>
        <begin position="314"/>
        <end position="333"/>
    </location>
</feature>
<feature type="strand" evidence="14">
    <location>
        <begin position="341"/>
        <end position="346"/>
    </location>
</feature>
<feature type="strand" evidence="14">
    <location>
        <begin position="348"/>
        <end position="350"/>
    </location>
</feature>
<feature type="strand" evidence="14">
    <location>
        <begin position="352"/>
        <end position="356"/>
    </location>
</feature>
<feature type="turn" evidence="14">
    <location>
        <begin position="365"/>
        <end position="367"/>
    </location>
</feature>
<feature type="strand" evidence="18">
    <location>
        <begin position="372"/>
        <end position="376"/>
    </location>
</feature>
<feature type="strand" evidence="13">
    <location>
        <begin position="377"/>
        <end position="379"/>
    </location>
</feature>
<feature type="helix" evidence="15">
    <location>
        <begin position="382"/>
        <end position="391"/>
    </location>
</feature>
<feature type="turn" evidence="18">
    <location>
        <begin position="393"/>
        <end position="395"/>
    </location>
</feature>
<feature type="strand" evidence="15">
    <location>
        <begin position="401"/>
        <end position="406"/>
    </location>
</feature>
<feature type="strand" evidence="15">
    <location>
        <begin position="409"/>
        <end position="414"/>
    </location>
</feature>
<feature type="helix" evidence="15">
    <location>
        <begin position="419"/>
        <end position="430"/>
    </location>
</feature>
<feature type="strand" evidence="15">
    <location>
        <begin position="431"/>
        <end position="433"/>
    </location>
</feature>
<feature type="helix" evidence="15">
    <location>
        <begin position="434"/>
        <end position="436"/>
    </location>
</feature>
<feature type="helix" evidence="13">
    <location>
        <begin position="437"/>
        <end position="440"/>
    </location>
</feature>
<feature type="strand" evidence="15">
    <location>
        <begin position="443"/>
        <end position="447"/>
    </location>
</feature>
<feature type="strand" evidence="16">
    <location>
        <begin position="451"/>
        <end position="453"/>
    </location>
</feature>
<feature type="strand" evidence="15">
    <location>
        <begin position="455"/>
        <end position="460"/>
    </location>
</feature>
<comment type="function">
    <text evidence="2 4 9">Catalytic subunit of the dimeric UBA3-NAE1 E1 enzyme. E1 activates NEDD8 by first adenylating its C-terminal glycine residue with ATP, thereafter linking this residue to the side chain of the catalytic cysteine, yielding a NEDD8-UBA3 thioester and free AMP. E1 finally transfers NEDD8 to the catalytic cysteine of UBE2M. Down-regulates steroid receptor activity. Necessary for cell cycle progression.</text>
</comment>
<comment type="catalytic activity">
    <molecule>NEDD8-activating enzyme E1 catalytic subunit</molecule>
    <reaction evidence="9">
        <text>ATP + [NEDD8 protein] + [E1 NEDD8-activating enzyme]-L-cysteine = AMP + diphosphate + [E1 NEDD8-activating enzyme]-S-[NEDD8 protein]-yl-L-cysteine.</text>
        <dbReference type="EC" id="6.2.1.64"/>
    </reaction>
</comment>
<comment type="activity regulation">
    <text>Binding of TP53BP2 to the regulatory subunit NAE1 decreases activity.</text>
</comment>
<comment type="pathway">
    <text>Protein modification; protein neddylation.</text>
</comment>
<comment type="subunit">
    <text evidence="1">Heterodimer of UBA3 and NAE1. Interacts with NEDD8, UBE2F and UBE2M. Binds ESR1 and ESR2 with bound steroid ligand (By similarity). Interacts with TBATA (By similarity).</text>
</comment>
<comment type="interaction">
    <interactant intactId="EBI-717567">
        <id>Q8TBC4</id>
    </interactant>
    <interactant intactId="EBI-1222467">
        <id>P02649</id>
        <label>APOE</label>
    </interactant>
    <organismsDiffer>false</organismsDiffer>
    <experiments>3</experiments>
</comment>
<comment type="interaction">
    <interactant intactId="EBI-717567">
        <id>Q8TBC4</id>
    </interactant>
    <interactant intactId="EBI-77613">
        <id>P05067</id>
        <label>APP</label>
    </interactant>
    <organismsDiffer>false</organismsDiffer>
    <experiments>3</experiments>
</comment>
<comment type="interaction">
    <interactant intactId="EBI-717567">
        <id>Q8TBC4</id>
    </interactant>
    <interactant intactId="EBI-7097057">
        <id>Q96FN4</id>
        <label>CPNE2</label>
    </interactant>
    <organismsDiffer>false</organismsDiffer>
    <experiments>6</experiments>
</comment>
<comment type="interaction">
    <interactant intactId="EBI-717567">
        <id>Q8TBC4</id>
    </interactant>
    <interactant intactId="EBI-724940">
        <id>Q9BVJ7</id>
        <label>DUSP23</label>
    </interactant>
    <organismsDiffer>false</organismsDiffer>
    <experiments>3</experiments>
</comment>
<comment type="interaction">
    <interactant intactId="EBI-717567">
        <id>Q8TBC4</id>
    </interactant>
    <interactant intactId="EBI-725233">
        <id>O14732</id>
        <label>IMPA2</label>
    </interactant>
    <organismsDiffer>false</organismsDiffer>
    <experiments>6</experiments>
</comment>
<comment type="interaction">
    <interactant intactId="EBI-717567">
        <id>Q8TBC4</id>
    </interactant>
    <interactant intactId="EBI-718631">
        <id>Q13564</id>
        <label>NAE1</label>
    </interactant>
    <organismsDiffer>false</organismsDiffer>
    <experiments>3</experiments>
</comment>
<comment type="interaction">
    <interactant intactId="EBI-717567">
        <id>Q8TBC4</id>
    </interactant>
    <interactant intactId="EBI-954531">
        <id>P54727</id>
        <label>RAD23B</label>
    </interactant>
    <organismsDiffer>false</organismsDiffer>
    <experiments>2</experiments>
</comment>
<comment type="interaction">
    <interactant intactId="EBI-717567">
        <id>Q8TBC4</id>
    </interactant>
    <interactant intactId="EBI-717567">
        <id>Q8TBC4</id>
        <label>UBA3</label>
    </interactant>
    <organismsDiffer>false</organismsDiffer>
    <experiments>4</experiments>
</comment>
<comment type="interaction">
    <interactant intactId="EBI-717567">
        <id>Q8TBC4</id>
    </interactant>
    <interactant intactId="EBI-1041660">
        <id>P61081</id>
        <label>UBE2M</label>
    </interactant>
    <organismsDiffer>false</organismsDiffer>
    <experiments>4</experiments>
</comment>
<comment type="alternative products">
    <event type="alternative splicing"/>
    <isoform>
        <id>Q8TBC4-1</id>
        <name>1</name>
        <sequence type="displayed"/>
    </isoform>
    <isoform>
        <id>Q8TBC4-2</id>
        <name>2</name>
        <sequence type="described" ref="VSP_041127"/>
    </isoform>
</comment>
<comment type="tissue specificity">
    <text evidence="2">Ubiquitously expressed.</text>
</comment>
<comment type="miscellaneous">
    <text>Arg-211 acts as a selectivity gate, preventing misactivation of ubiquitin by this NEDD8-specific E1 complex.</text>
</comment>
<comment type="similarity">
    <text evidence="11">Belongs to the ubiquitin-activating E1 family. UBA3 subfamily.</text>
</comment>
<comment type="sequence caution" evidence="11">
    <conflict type="erroneous initiation">
        <sequence resource="EMBL-CDS" id="AAC27648"/>
    </conflict>
</comment>
<organism>
    <name type="scientific">Homo sapiens</name>
    <name type="common">Human</name>
    <dbReference type="NCBI Taxonomy" id="9606"/>
    <lineage>
        <taxon>Eukaryota</taxon>
        <taxon>Metazoa</taxon>
        <taxon>Chordata</taxon>
        <taxon>Craniata</taxon>
        <taxon>Vertebrata</taxon>
        <taxon>Euteleostomi</taxon>
        <taxon>Mammalia</taxon>
        <taxon>Eutheria</taxon>
        <taxon>Euarchontoglires</taxon>
        <taxon>Primates</taxon>
        <taxon>Haplorrhini</taxon>
        <taxon>Catarrhini</taxon>
        <taxon>Hominidae</taxon>
        <taxon>Homo</taxon>
    </lineage>
</organism>
<keyword id="KW-0002">3D-structure</keyword>
<keyword id="KW-0007">Acetylation</keyword>
<keyword id="KW-0025">Alternative splicing</keyword>
<keyword id="KW-0067">ATP-binding</keyword>
<keyword id="KW-0131">Cell cycle</keyword>
<keyword id="KW-0436">Ligase</keyword>
<keyword id="KW-0547">Nucleotide-binding</keyword>
<keyword id="KW-1267">Proteomics identification</keyword>
<keyword id="KW-1185">Reference proteome</keyword>
<keyword id="KW-0833">Ubl conjugation pathway</keyword>
<name>UBA3_HUMAN</name>